<evidence type="ECO:0000250" key="1"/>
<evidence type="ECO:0000256" key="2">
    <source>
        <dbReference type="SAM" id="MobiDB-lite"/>
    </source>
</evidence>
<evidence type="ECO:0000305" key="3"/>
<proteinExistence type="inferred from homology"/>
<comment type="function">
    <text evidence="1">Forms a chaperone-bound H2A.Z-H2B complex that acts as a source for SWR1 complex-dependent H2A to H2A.Z histone replacement in chromatin.</text>
</comment>
<comment type="subunit">
    <text evidence="1">Forms a heterotrimer with H2A.Z-H2B, stabilizing the association of the histone dimer. Also, with a lower affinity, forms a heterotrimer with H2A-H2B (By similarity).</text>
</comment>
<comment type="subcellular location">
    <subcellularLocation>
        <location evidence="1">Nucleus</location>
    </subcellularLocation>
</comment>
<comment type="similarity">
    <text evidence="3">Belongs to the CHZ1 family.</text>
</comment>
<feature type="chain" id="PRO_0000330209" description="Histone H2A.Z-specific chaperone CHZ1">
    <location>
        <begin position="1"/>
        <end position="117"/>
    </location>
</feature>
<feature type="region of interest" description="Disordered" evidence="2">
    <location>
        <begin position="1"/>
        <end position="117"/>
    </location>
</feature>
<feature type="compositionally biased region" description="Polar residues" evidence="2">
    <location>
        <begin position="1"/>
        <end position="16"/>
    </location>
</feature>
<feature type="compositionally biased region" description="Acidic residues" evidence="2">
    <location>
        <begin position="34"/>
        <end position="72"/>
    </location>
</feature>
<feature type="compositionally biased region" description="Basic and acidic residues" evidence="2">
    <location>
        <begin position="86"/>
        <end position="96"/>
    </location>
</feature>
<feature type="compositionally biased region" description="Acidic residues" evidence="2">
    <location>
        <begin position="106"/>
        <end position="117"/>
    </location>
</feature>
<gene>
    <name type="primary">CHZ1</name>
    <name type="ORF">CC1G_02291</name>
</gene>
<protein>
    <recommendedName>
        <fullName>Histone H2A.Z-specific chaperone CHZ1</fullName>
    </recommendedName>
</protein>
<keyword id="KW-0143">Chaperone</keyword>
<keyword id="KW-0539">Nucleus</keyword>
<keyword id="KW-1185">Reference proteome</keyword>
<reference key="1">
    <citation type="journal article" date="2010" name="Proc. Natl. Acad. Sci. U.S.A.">
        <title>Insights into evolution of multicellular fungi from the assembled chromosomes of the mushroom Coprinopsis cinerea (Coprinus cinereus).</title>
        <authorList>
            <person name="Stajich J.E."/>
            <person name="Wilke S.K."/>
            <person name="Ahren D."/>
            <person name="Au C.H."/>
            <person name="Birren B.W."/>
            <person name="Borodovsky M."/>
            <person name="Burns C."/>
            <person name="Canbaeck B."/>
            <person name="Casselton L.A."/>
            <person name="Cheng C.K."/>
            <person name="Deng J."/>
            <person name="Dietrich F.S."/>
            <person name="Fargo D.C."/>
            <person name="Farman M.L."/>
            <person name="Gathman A.C."/>
            <person name="Goldberg J."/>
            <person name="Guigo R."/>
            <person name="Hoegger P.J."/>
            <person name="Hooker J.B."/>
            <person name="Huggins A."/>
            <person name="James T.Y."/>
            <person name="Kamada T."/>
            <person name="Kilaru S."/>
            <person name="Kodira C."/>
            <person name="Kuees U."/>
            <person name="Kupfer D."/>
            <person name="Kwan H.S."/>
            <person name="Lomsadze A."/>
            <person name="Li W."/>
            <person name="Lilly W.W."/>
            <person name="Ma L.-J."/>
            <person name="Mackey A.J."/>
            <person name="Manning G."/>
            <person name="Martin F."/>
            <person name="Muraguchi H."/>
            <person name="Natvig D.O."/>
            <person name="Palmerini H."/>
            <person name="Ramesh M.A."/>
            <person name="Rehmeyer C.J."/>
            <person name="Roe B.A."/>
            <person name="Shenoy N."/>
            <person name="Stanke M."/>
            <person name="Ter-Hovhannisyan V."/>
            <person name="Tunlid A."/>
            <person name="Velagapudi R."/>
            <person name="Vision T.J."/>
            <person name="Zeng Q."/>
            <person name="Zolan M.E."/>
            <person name="Pukkila P.J."/>
        </authorList>
    </citation>
    <scope>NUCLEOTIDE SEQUENCE [LARGE SCALE GENOMIC DNA]</scope>
    <source>
        <strain>Okayama-7 / 130 / ATCC MYA-4618 / FGSC 9003</strain>
    </source>
</reference>
<sequence>MSSSVTDPTNAQNTASDAVAASTVDKGKGKSTEIADESMESVDDEEEEDDDDDDDEVEEDDDEEEETFEEIDPSAILPTGRRTRGVRVDYTSKEALAKAGLTGNEHDEDDDGDTEMN</sequence>
<name>CHZ1_COPC7</name>
<organism>
    <name type="scientific">Coprinopsis cinerea (strain Okayama-7 / 130 / ATCC MYA-4618 / FGSC 9003)</name>
    <name type="common">Inky cap fungus</name>
    <name type="synonym">Hormographiella aspergillata</name>
    <dbReference type="NCBI Taxonomy" id="240176"/>
    <lineage>
        <taxon>Eukaryota</taxon>
        <taxon>Fungi</taxon>
        <taxon>Dikarya</taxon>
        <taxon>Basidiomycota</taxon>
        <taxon>Agaricomycotina</taxon>
        <taxon>Agaricomycetes</taxon>
        <taxon>Agaricomycetidae</taxon>
        <taxon>Agaricales</taxon>
        <taxon>Agaricineae</taxon>
        <taxon>Psathyrellaceae</taxon>
        <taxon>Coprinopsis</taxon>
    </lineage>
</organism>
<dbReference type="EMBL" id="AACS02000003">
    <property type="protein sequence ID" value="EAU90904.1"/>
    <property type="molecule type" value="Genomic_DNA"/>
</dbReference>
<dbReference type="RefSeq" id="XP_001830840.1">
    <property type="nucleotide sequence ID" value="XM_001830788.1"/>
</dbReference>
<dbReference type="SMR" id="A8N7N4"/>
<dbReference type="STRING" id="240176.A8N7N4"/>
<dbReference type="GeneID" id="6007288"/>
<dbReference type="KEGG" id="cci:CC1G_02291"/>
<dbReference type="VEuPathDB" id="FungiDB:CC1G_02291"/>
<dbReference type="eggNOG" id="ENOG502SCUM">
    <property type="taxonomic scope" value="Eukaryota"/>
</dbReference>
<dbReference type="HOGENOM" id="CLU_130004_0_1_1"/>
<dbReference type="InParanoid" id="A8N7N4"/>
<dbReference type="OMA" id="MEGVQDP"/>
<dbReference type="OrthoDB" id="3364766at2759"/>
<dbReference type="Proteomes" id="UP000001861">
    <property type="component" value="Unassembled WGS sequence"/>
</dbReference>
<dbReference type="GO" id="GO:0005634">
    <property type="term" value="C:nucleus"/>
    <property type="evidence" value="ECO:0007669"/>
    <property type="project" value="UniProtKB-SubCell"/>
</dbReference>
<dbReference type="InterPro" id="IPR019098">
    <property type="entry name" value="Histone_chaperone_domain_CHZ"/>
</dbReference>
<dbReference type="Pfam" id="PF09649">
    <property type="entry name" value="CHZ"/>
    <property type="match status" value="1"/>
</dbReference>
<dbReference type="SMART" id="SM01082">
    <property type="entry name" value="CHZ"/>
    <property type="match status" value="1"/>
</dbReference>
<accession>A8N7N4</accession>